<name>SKOR1_HUMAN</name>
<dbReference type="EMBL" id="AY669507">
    <property type="protein sequence ID" value="AAV74188.1"/>
    <property type="molecule type" value="mRNA"/>
</dbReference>
<dbReference type="EMBL" id="AC009292">
    <property type="status" value="NOT_ANNOTATED_CDS"/>
    <property type="molecule type" value="Genomic_DNA"/>
</dbReference>
<dbReference type="EMBL" id="BC168376">
    <property type="protein sequence ID" value="AAI68376.1"/>
    <property type="molecule type" value="mRNA"/>
</dbReference>
<dbReference type="CCDS" id="CCDS92030.1">
    <molecule id="P84550-1"/>
</dbReference>
<dbReference type="RefSeq" id="NP_001244953.1">
    <property type="nucleotide sequence ID" value="NM_001258024.1"/>
</dbReference>
<dbReference type="RefSeq" id="NP_001352844.1">
    <molecule id="P84550-1"/>
    <property type="nucleotide sequence ID" value="NM_001365915.1"/>
</dbReference>
<dbReference type="RefSeq" id="XP_016877662.1">
    <property type="nucleotide sequence ID" value="XM_017022173.1"/>
</dbReference>
<dbReference type="SMR" id="P84550"/>
<dbReference type="BioGRID" id="133624">
    <property type="interactions" value="13"/>
</dbReference>
<dbReference type="FunCoup" id="P84550">
    <property type="interactions" value="45"/>
</dbReference>
<dbReference type="IntAct" id="P84550">
    <property type="interactions" value="5"/>
</dbReference>
<dbReference type="MINT" id="P84550"/>
<dbReference type="GlyGen" id="P84550">
    <property type="glycosylation" value="1 site, 1 O-linked glycan (1 site)"/>
</dbReference>
<dbReference type="iPTMnet" id="P84550"/>
<dbReference type="PhosphoSitePlus" id="P84550"/>
<dbReference type="BioMuta" id="SKOR1"/>
<dbReference type="DMDM" id="68052265"/>
<dbReference type="jPOST" id="P84550"/>
<dbReference type="MassIVE" id="P84550"/>
<dbReference type="PeptideAtlas" id="P84550"/>
<dbReference type="ProteomicsDB" id="57758">
    <molecule id="P84550-1"/>
</dbReference>
<dbReference type="ProteomicsDB" id="57759">
    <molecule id="P84550-2"/>
</dbReference>
<dbReference type="ProteomicsDB" id="57760">
    <molecule id="P84550-3"/>
</dbReference>
<dbReference type="Antibodypedia" id="50926">
    <property type="antibodies" value="30 antibodies from 12 providers"/>
</dbReference>
<dbReference type="DNASU" id="390598"/>
<dbReference type="Ensembl" id="ENST00000341418.10">
    <molecule id="P84550-2"/>
    <property type="protein sequence ID" value="ENSP00000343200.5"/>
    <property type="gene ID" value="ENSG00000188779.12"/>
</dbReference>
<dbReference type="Ensembl" id="ENST00000380035.3">
    <molecule id="P84550-1"/>
    <property type="protein sequence ID" value="ENSP00000369374.2"/>
    <property type="gene ID" value="ENSG00000188779.12"/>
</dbReference>
<dbReference type="GeneID" id="390598"/>
<dbReference type="MANE-Select" id="ENST00000380035.3">
    <property type="protein sequence ID" value="ENSP00000369374.2"/>
    <property type="RefSeq nucleotide sequence ID" value="NM_001365915.1"/>
    <property type="RefSeq protein sequence ID" value="NP_001352844.1"/>
</dbReference>
<dbReference type="UCSC" id="uc031qsn.2">
    <molecule id="P84550-1"/>
    <property type="organism name" value="human"/>
</dbReference>
<dbReference type="AGR" id="HGNC:21326"/>
<dbReference type="GeneCards" id="SKOR1"/>
<dbReference type="HGNC" id="HGNC:21326">
    <property type="gene designation" value="SKOR1"/>
</dbReference>
<dbReference type="HPA" id="ENSG00000188779">
    <property type="expression patterns" value="Tissue enriched (brain)"/>
</dbReference>
<dbReference type="MIM" id="611273">
    <property type="type" value="gene"/>
</dbReference>
<dbReference type="neXtProt" id="NX_P84550"/>
<dbReference type="OpenTargets" id="ENSG00000188779"/>
<dbReference type="PharmGKB" id="PA165479509"/>
<dbReference type="VEuPathDB" id="HostDB:ENSG00000188779"/>
<dbReference type="eggNOG" id="ENOG502QQC2">
    <property type="taxonomic scope" value="Eukaryota"/>
</dbReference>
<dbReference type="GeneTree" id="ENSGT00940000158440"/>
<dbReference type="HOGENOM" id="CLU_011930_1_1_1"/>
<dbReference type="InParanoid" id="P84550"/>
<dbReference type="OMA" id="YLCTPER"/>
<dbReference type="OrthoDB" id="3938623at2759"/>
<dbReference type="PAN-GO" id="P84550">
    <property type="GO annotations" value="7 GO annotations based on evolutionary models"/>
</dbReference>
<dbReference type="PhylomeDB" id="P84550"/>
<dbReference type="TreeFam" id="TF324133"/>
<dbReference type="PathwayCommons" id="P84550"/>
<dbReference type="SignaLink" id="P84550"/>
<dbReference type="SIGNOR" id="P84550"/>
<dbReference type="BioGRID-ORCS" id="390598">
    <property type="hits" value="11 hits in 1146 CRISPR screens"/>
</dbReference>
<dbReference type="GenomeRNAi" id="390598"/>
<dbReference type="Pharos" id="P84550">
    <property type="development level" value="Tbio"/>
</dbReference>
<dbReference type="PRO" id="PR:P84550"/>
<dbReference type="Proteomes" id="UP000005640">
    <property type="component" value="Chromosome 15"/>
</dbReference>
<dbReference type="RNAct" id="P84550">
    <property type="molecule type" value="protein"/>
</dbReference>
<dbReference type="Bgee" id="ENSG00000188779">
    <property type="expression patterns" value="Expressed in right hemisphere of cerebellum and 83 other cell types or tissues"/>
</dbReference>
<dbReference type="ExpressionAtlas" id="P84550">
    <property type="expression patterns" value="baseline and differential"/>
</dbReference>
<dbReference type="GO" id="GO:0005737">
    <property type="term" value="C:cytoplasm"/>
    <property type="evidence" value="ECO:0000318"/>
    <property type="project" value="GO_Central"/>
</dbReference>
<dbReference type="GO" id="GO:0030425">
    <property type="term" value="C:dendrite"/>
    <property type="evidence" value="ECO:0000314"/>
    <property type="project" value="UniProtKB"/>
</dbReference>
<dbReference type="GO" id="GO:0043025">
    <property type="term" value="C:neuronal cell body"/>
    <property type="evidence" value="ECO:0000314"/>
    <property type="project" value="UniProtKB"/>
</dbReference>
<dbReference type="GO" id="GO:0005634">
    <property type="term" value="C:nucleus"/>
    <property type="evidence" value="ECO:0000318"/>
    <property type="project" value="GO_Central"/>
</dbReference>
<dbReference type="GO" id="GO:0005667">
    <property type="term" value="C:transcription regulator complex"/>
    <property type="evidence" value="ECO:0000318"/>
    <property type="project" value="GO_Central"/>
</dbReference>
<dbReference type="GO" id="GO:0000981">
    <property type="term" value="F:DNA-binding transcription factor activity, RNA polymerase II-specific"/>
    <property type="evidence" value="ECO:0000318"/>
    <property type="project" value="GO_Central"/>
</dbReference>
<dbReference type="GO" id="GO:0000978">
    <property type="term" value="F:RNA polymerase II cis-regulatory region sequence-specific DNA binding"/>
    <property type="evidence" value="ECO:0000318"/>
    <property type="project" value="GO_Central"/>
</dbReference>
<dbReference type="GO" id="GO:1990837">
    <property type="term" value="F:sequence-specific double-stranded DNA binding"/>
    <property type="evidence" value="ECO:0000314"/>
    <property type="project" value="ARUK-UCL"/>
</dbReference>
<dbReference type="GO" id="GO:0046332">
    <property type="term" value="F:SMAD binding"/>
    <property type="evidence" value="ECO:0000353"/>
    <property type="project" value="UniProtKB"/>
</dbReference>
<dbReference type="GO" id="GO:0030514">
    <property type="term" value="P:negative regulation of BMP signaling pathway"/>
    <property type="evidence" value="ECO:0000314"/>
    <property type="project" value="UniProtKB"/>
</dbReference>
<dbReference type="GO" id="GO:0000122">
    <property type="term" value="P:negative regulation of transcription by RNA polymerase II"/>
    <property type="evidence" value="ECO:0000318"/>
    <property type="project" value="GO_Central"/>
</dbReference>
<dbReference type="GO" id="GO:0006355">
    <property type="term" value="P:regulation of DNA-templated transcription"/>
    <property type="evidence" value="ECO:0000303"/>
    <property type="project" value="UniProtKB"/>
</dbReference>
<dbReference type="CDD" id="cd21080">
    <property type="entry name" value="DHD_Skor"/>
    <property type="match status" value="1"/>
</dbReference>
<dbReference type="FunFam" id="3.10.390.10:FF:000001">
    <property type="entry name" value="SKI family transcriptional corepressor 1"/>
    <property type="match status" value="1"/>
</dbReference>
<dbReference type="FunFam" id="3.10.260.20:FF:000003">
    <property type="entry name" value="SKI family transcriptional corepressor 1 homolog-B-like"/>
    <property type="match status" value="1"/>
</dbReference>
<dbReference type="Gene3D" id="3.10.390.10">
    <property type="entry name" value="SAND domain-like"/>
    <property type="match status" value="1"/>
</dbReference>
<dbReference type="Gene3D" id="3.10.260.20">
    <property type="entry name" value="Ski"/>
    <property type="match status" value="1"/>
</dbReference>
<dbReference type="InterPro" id="IPR014890">
    <property type="entry name" value="c-SKI_SMAD4-bd_dom"/>
</dbReference>
<dbReference type="InterPro" id="IPR009061">
    <property type="entry name" value="DNA-bd_dom_put_sf"/>
</dbReference>
<dbReference type="InterPro" id="IPR010919">
    <property type="entry name" value="SAND-like_dom_sf"/>
</dbReference>
<dbReference type="InterPro" id="IPR003380">
    <property type="entry name" value="SKI/SNO/DAC"/>
</dbReference>
<dbReference type="InterPro" id="IPR037000">
    <property type="entry name" value="Ski_DNA-bd_sf"/>
</dbReference>
<dbReference type="InterPro" id="IPR023216">
    <property type="entry name" value="Tscrpt_reg_SKI_SnoN"/>
</dbReference>
<dbReference type="PANTHER" id="PTHR10005:SF8">
    <property type="entry name" value="SKI FAMILY TRANSCRIPTIONAL COREPRESSOR 1"/>
    <property type="match status" value="1"/>
</dbReference>
<dbReference type="PANTHER" id="PTHR10005">
    <property type="entry name" value="SKI ONCOGENE-RELATED"/>
    <property type="match status" value="1"/>
</dbReference>
<dbReference type="Pfam" id="PF08782">
    <property type="entry name" value="c-SKI_SMAD_bind"/>
    <property type="match status" value="1"/>
</dbReference>
<dbReference type="Pfam" id="PF02437">
    <property type="entry name" value="Ski_Sno_DHD"/>
    <property type="match status" value="1"/>
</dbReference>
<dbReference type="SMART" id="SM01046">
    <property type="entry name" value="c-SKI_SMAD_bind"/>
    <property type="match status" value="1"/>
</dbReference>
<dbReference type="SUPFAM" id="SSF46955">
    <property type="entry name" value="Putative DNA-binding domain"/>
    <property type="match status" value="1"/>
</dbReference>
<dbReference type="SUPFAM" id="SSF63763">
    <property type="entry name" value="SAND domain-like"/>
    <property type="match status" value="1"/>
</dbReference>
<proteinExistence type="evidence at protein level"/>
<sequence length="965" mass="99831">MALLCGLGQVTLRIWVSLPSQSENGIGFLAARAFLRSGGMEALTTQLGPGREGSSSPNSKQELQPYSGSSALKPNQVGETSLYGVPIVSLVIDGQERLCLAQISNTLLKNYSYNEIHNRRVALGITCVQCTPVQLEILRRAGAMPISSRRCGMITKREAERLCKSFLGEHKPPKLPENFAFDVVHECAWGSRGSFIPARYNSSRAKCIKCGYCSMYFSPNKFIFHSHRTPDAKYTQPDAANFNSWRRHLKLSDKSATDELSHAWEDVKAMFNGGTRKRTFSLQGGGGGGANGGSGGQGKGGAGGGGGGGPGCGAEMAPGPPPHKSLRCGEDEAAGPPGPPPPHPQRGLGLATGASGPAGPGGPGGGAGVRSYPVIPVPSKGFGLLQKLPPPLFPHPYGFPTAFGLCPKKDDPVLGAGEPKGGPGTGSGGGGAGTGGGAGGPGASHLPPGAGAGPGGGAMFWGHQPSGAAKDAAAVAAAAAAATVYPTFPMFWPAAGSLPVPSYPAAQSQAKAVAAAVAAAAAAAAAAAGSGAPEPLDGAEPAKESGLGAEERCPSALSRGPLDEDGTDEALPPPLAPLPPPPPPPARKGSYVSAFRPVVKDTESIAKLYGSAREAYGAGPARGPGPGAGSGGYVSPDFLSEGSSSYNSASPDVDTADEPEVDVESNRFPDDEDAQEETEPSAPSAGGGPDGEQPTGPPSATSSGADGPANSPDGGSPRPRRRLGPPPAGRPAFGDLAAEDLVRRPERSPPSGGGGYELREPCGPLGGPAPAKVFAPERDEHVKSAAVALGPAASYVCTPEAHEPDKEDNHSPADDLETRKSYPDQRSISQPSPANTDRGEDGLTLDVTGTHLVEKDIENLAREELQKLLLEQMELRKKLEREFQSLKDNFQDQMKRELAYREEMVQQLQIVRDTLCNELDQERKARYAIQQKLKEAHDALHHFSCKMLTPRHCTGNCSFKPPLLP</sequence>
<comment type="function">
    <text evidence="1">Acts as a transcriptional corepressor of LBX1 (By similarity). Inhibits BMP signaling.</text>
</comment>
<comment type="subunit">
    <text evidence="1 4">Interacts with LBX1 (By similarity). Interacts with SMAD1, SMAD2 and SMAD3.</text>
</comment>
<comment type="subcellular location">
    <subcellularLocation>
        <location evidence="1">Nucleus</location>
    </subcellularLocation>
</comment>
<comment type="alternative products">
    <event type="alternative splicing"/>
    <isoform>
        <id>P84550-1</id>
        <name>1</name>
        <sequence type="displayed"/>
    </isoform>
    <isoform>
        <id>P84550-2</id>
        <name>2</name>
        <sequence type="described" ref="VSP_033678 VSP_033679 VSP_033680 VSP_033681"/>
    </isoform>
    <isoform>
        <id>P84550-3</id>
        <name>3</name>
        <sequence type="described" ref="VSP_040199 VSP_040200"/>
    </isoform>
</comment>
<comment type="tissue specificity">
    <text evidence="4">Present specifically in cerebellar Purkinje cells (at protein level).</text>
</comment>
<comment type="similarity">
    <text evidence="2">Belongs to the SKI family.</text>
</comment>
<protein>
    <recommendedName>
        <fullName>SKI family transcriptional corepressor 1</fullName>
    </recommendedName>
    <alternativeName>
        <fullName>Functional Smad-suppressing element on chromosome 15</fullName>
        <shortName>Fussel-15</shortName>
    </alternativeName>
    <alternativeName>
        <fullName>LBX1 corepressor 1</fullName>
    </alternativeName>
    <alternativeName>
        <fullName>Ladybird homeobox corepressor 1</fullName>
    </alternativeName>
</protein>
<reference key="1">
    <citation type="journal article" date="2007" name="Mol. Cell. Neurosci.">
        <title>Fussel-15, a novel Ski/Sno homolog protein, antagonizes BMP signaling.</title>
        <authorList>
            <person name="Arndt S."/>
            <person name="Poser I."/>
            <person name="Moser M."/>
            <person name="Bosserhoff A.-K."/>
        </authorList>
    </citation>
    <scope>NUCLEOTIDE SEQUENCE [MRNA] (ISOFORM 2)</scope>
    <scope>TISSUE SPECIFICITY</scope>
    <scope>INTERACTION WITH SMAD1; SMAD2 AND SMAD3</scope>
</reference>
<reference key="2">
    <citation type="journal article" date="2006" name="Nature">
        <title>Analysis of the DNA sequence and duplication history of human chromosome 15.</title>
        <authorList>
            <person name="Zody M.C."/>
            <person name="Garber M."/>
            <person name="Sharpe T."/>
            <person name="Young S.K."/>
            <person name="Rowen L."/>
            <person name="O'Neill K."/>
            <person name="Whittaker C.A."/>
            <person name="Kamal M."/>
            <person name="Chang J.L."/>
            <person name="Cuomo C.A."/>
            <person name="Dewar K."/>
            <person name="FitzGerald M.G."/>
            <person name="Kodira C.D."/>
            <person name="Madan A."/>
            <person name="Qin S."/>
            <person name="Yang X."/>
            <person name="Abbasi N."/>
            <person name="Abouelleil A."/>
            <person name="Arachchi H.M."/>
            <person name="Baradarani L."/>
            <person name="Birditt B."/>
            <person name="Bloom S."/>
            <person name="Bloom T."/>
            <person name="Borowsky M.L."/>
            <person name="Burke J."/>
            <person name="Butler J."/>
            <person name="Cook A."/>
            <person name="DeArellano K."/>
            <person name="DeCaprio D."/>
            <person name="Dorris L. III"/>
            <person name="Dors M."/>
            <person name="Eichler E.E."/>
            <person name="Engels R."/>
            <person name="Fahey J."/>
            <person name="Fleetwood P."/>
            <person name="Friedman C."/>
            <person name="Gearin G."/>
            <person name="Hall J.L."/>
            <person name="Hensley G."/>
            <person name="Johnson E."/>
            <person name="Jones C."/>
            <person name="Kamat A."/>
            <person name="Kaur A."/>
            <person name="Locke D.P."/>
            <person name="Madan A."/>
            <person name="Munson G."/>
            <person name="Jaffe D.B."/>
            <person name="Lui A."/>
            <person name="Macdonald P."/>
            <person name="Mauceli E."/>
            <person name="Naylor J.W."/>
            <person name="Nesbitt R."/>
            <person name="Nicol R."/>
            <person name="O'Leary S.B."/>
            <person name="Ratcliffe A."/>
            <person name="Rounsley S."/>
            <person name="She X."/>
            <person name="Sneddon K.M.B."/>
            <person name="Stewart S."/>
            <person name="Sougnez C."/>
            <person name="Stone S.M."/>
            <person name="Topham K."/>
            <person name="Vincent D."/>
            <person name="Wang S."/>
            <person name="Zimmer A.R."/>
            <person name="Birren B.W."/>
            <person name="Hood L."/>
            <person name="Lander E.S."/>
            <person name="Nusbaum C."/>
        </authorList>
    </citation>
    <scope>NUCLEOTIDE SEQUENCE [LARGE SCALE GENOMIC DNA]</scope>
</reference>
<reference key="3">
    <citation type="journal article" date="2004" name="Genome Res.">
        <title>The status, quality, and expansion of the NIH full-length cDNA project: the Mammalian Gene Collection (MGC).</title>
        <authorList>
            <consortium name="The MGC Project Team"/>
        </authorList>
    </citation>
    <scope>NUCLEOTIDE SEQUENCE [LARGE SCALE MRNA] (ISOFORM 3)</scope>
</reference>
<reference key="4">
    <citation type="journal article" date="2017" name="J. Am. Soc. Nephrol.">
        <title>MAGI2 mutations cause congenital nephrotic syndrome.</title>
        <authorList>
            <consortium name="NephroS"/>
            <consortium name="UK study of Nephrotic Syndrome"/>
            <person name="Bierzynska A."/>
            <person name="Soderquest K."/>
            <person name="Dean P."/>
            <person name="Colby E."/>
            <person name="Rollason R."/>
            <person name="Jones C."/>
            <person name="Inward C.D."/>
            <person name="McCarthy H.J."/>
            <person name="Simpson M.A."/>
            <person name="Lord G.M."/>
            <person name="Williams M."/>
            <person name="Welsh G.I."/>
            <person name="Koziell A.B."/>
            <person name="Saleem M.A."/>
        </authorList>
    </citation>
    <scope>VARIANT GLN-73</scope>
</reference>
<gene>
    <name type="primary">SKOR1</name>
    <name type="synonym">CORL1</name>
    <name type="synonym">FUSSEL15</name>
    <name type="synonym">LBXCOR1</name>
</gene>
<evidence type="ECO:0000250" key="1"/>
<evidence type="ECO:0000255" key="2"/>
<evidence type="ECO:0000256" key="3">
    <source>
        <dbReference type="SAM" id="MobiDB-lite"/>
    </source>
</evidence>
<evidence type="ECO:0000269" key="4">
    <source>
    </source>
</evidence>
<evidence type="ECO:0000269" key="5">
    <source>
    </source>
</evidence>
<evidence type="ECO:0000303" key="6">
    <source>
    </source>
</evidence>
<evidence type="ECO:0000303" key="7">
    <source>
    </source>
</evidence>
<accession>P84550</accession>
<accession>A6NIP4</accession>
<accession>A6NJY0</accession>
<accession>Q2VWA5</accession>
<feature type="chain" id="PRO_0000129390" description="SKI family transcriptional corepressor 1">
    <location>
        <begin position="1"/>
        <end position="965"/>
    </location>
</feature>
<feature type="region of interest" description="Disordered" evidence="3">
    <location>
        <begin position="45"/>
        <end position="72"/>
    </location>
</feature>
<feature type="region of interest" description="Disordered" evidence="3">
    <location>
        <begin position="278"/>
        <end position="367"/>
    </location>
</feature>
<feature type="region of interest" description="Disordered" evidence="3">
    <location>
        <begin position="410"/>
        <end position="458"/>
    </location>
</feature>
<feature type="region of interest" description="Disordered" evidence="3">
    <location>
        <begin position="530"/>
        <end position="592"/>
    </location>
</feature>
<feature type="region of interest" description="Disordered" evidence="3">
    <location>
        <begin position="615"/>
        <end position="777"/>
    </location>
</feature>
<feature type="region of interest" description="Disordered" evidence="3">
    <location>
        <begin position="796"/>
        <end position="843"/>
    </location>
</feature>
<feature type="coiled-coil region" evidence="2">
    <location>
        <begin position="858"/>
        <end position="922"/>
    </location>
</feature>
<feature type="compositionally biased region" description="Gly residues" evidence="3">
    <location>
        <begin position="283"/>
        <end position="312"/>
    </location>
</feature>
<feature type="compositionally biased region" description="Gly residues" evidence="3">
    <location>
        <begin position="356"/>
        <end position="367"/>
    </location>
</feature>
<feature type="compositionally biased region" description="Gly residues" evidence="3">
    <location>
        <begin position="418"/>
        <end position="442"/>
    </location>
</feature>
<feature type="compositionally biased region" description="Pro residues" evidence="3">
    <location>
        <begin position="571"/>
        <end position="586"/>
    </location>
</feature>
<feature type="compositionally biased region" description="Gly residues" evidence="3">
    <location>
        <begin position="620"/>
        <end position="632"/>
    </location>
</feature>
<feature type="compositionally biased region" description="Polar residues" evidence="3">
    <location>
        <begin position="641"/>
        <end position="650"/>
    </location>
</feature>
<feature type="compositionally biased region" description="Acidic residues" evidence="3">
    <location>
        <begin position="654"/>
        <end position="663"/>
    </location>
</feature>
<feature type="compositionally biased region" description="Acidic residues" evidence="3">
    <location>
        <begin position="670"/>
        <end position="679"/>
    </location>
</feature>
<feature type="compositionally biased region" description="Basic and acidic residues" evidence="3">
    <location>
        <begin position="800"/>
        <end position="823"/>
    </location>
</feature>
<feature type="compositionally biased region" description="Polar residues" evidence="3">
    <location>
        <begin position="824"/>
        <end position="835"/>
    </location>
</feature>
<feature type="splice variant" id="VSP_033678" description="In isoform 2." evidence="7">
    <original>MALLCGLGQVTLRIWVSLPSQSENGIGFLAARAFLR</original>
    <variation>MIPKSLVQAAETQRGLCEPGGKGREGRSGGKGETRPRGVGTQEGKGTIPGSPREKRGERGEGDPALLPAEDLWRLPGSKDRLRSSLLPPPGPPSSDSGPGPPSSHSGKTAQGPRTLNWARKQSARTSSNLCAWSLAMATKMAEIPSSPYEPGQRGMKDTQRGDAPQRGSPEPRILQLARVGNVYLKEESSRSGRLEAKKWIPTKFLENLSVPHVDLGGNQLW</variation>
    <location>
        <begin position="1"/>
        <end position="36"/>
    </location>
</feature>
<feature type="splice variant" id="VSP_040199" description="In isoform 3." evidence="6">
    <location>
        <begin position="28"/>
        <end position="36"/>
    </location>
</feature>
<feature type="splice variant" id="VSP_033679" description="In isoform 2." evidence="7">
    <location>
        <begin position="267"/>
        <end position="345"/>
    </location>
</feature>
<feature type="splice variant" id="VSP_040200" description="In isoform 3." evidence="6">
    <location>
        <begin position="277"/>
        <end position="311"/>
    </location>
</feature>
<feature type="splice variant" id="VSP_033680" description="In isoform 2." evidence="7">
    <location>
        <begin position="422"/>
        <end position="588"/>
    </location>
</feature>
<feature type="splice variant" id="VSP_033681" description="In isoform 2." evidence="7">
    <location>
        <begin position="691"/>
        <end position="727"/>
    </location>
</feature>
<feature type="sequence variant" id="VAR_079272" description="In dbSNP:rs776369126." evidence="5">
    <original>K</original>
    <variation>Q</variation>
    <location>
        <position position="73"/>
    </location>
</feature>
<feature type="sequence variant" id="VAR_082916" evidence="5">
    <original>R</original>
    <variation>T</variation>
    <location sequence="P84550-2">
        <position position="27"/>
    </location>
</feature>
<organism>
    <name type="scientific">Homo sapiens</name>
    <name type="common">Human</name>
    <dbReference type="NCBI Taxonomy" id="9606"/>
    <lineage>
        <taxon>Eukaryota</taxon>
        <taxon>Metazoa</taxon>
        <taxon>Chordata</taxon>
        <taxon>Craniata</taxon>
        <taxon>Vertebrata</taxon>
        <taxon>Euteleostomi</taxon>
        <taxon>Mammalia</taxon>
        <taxon>Eutheria</taxon>
        <taxon>Euarchontoglires</taxon>
        <taxon>Primates</taxon>
        <taxon>Haplorrhini</taxon>
        <taxon>Catarrhini</taxon>
        <taxon>Hominidae</taxon>
        <taxon>Homo</taxon>
    </lineage>
</organism>
<keyword id="KW-0025">Alternative splicing</keyword>
<keyword id="KW-0175">Coiled coil</keyword>
<keyword id="KW-0539">Nucleus</keyword>
<keyword id="KW-1267">Proteomics identification</keyword>
<keyword id="KW-1185">Reference proteome</keyword>
<keyword id="KW-0678">Repressor</keyword>
<keyword id="KW-0804">Transcription</keyword>
<keyword id="KW-0805">Transcription regulation</keyword>